<protein>
    <recommendedName>
        <fullName evidence="1">Protein Ycf2</fullName>
    </recommendedName>
</protein>
<gene>
    <name evidence="1" type="primary">ycf2-A</name>
</gene>
<gene>
    <name evidence="1" type="primary">ycf2-B</name>
</gene>
<organism>
    <name type="scientific">Arabis hirsuta</name>
    <name type="common">Hairy rock-cress</name>
    <name type="synonym">Turritis hirsuta</name>
    <dbReference type="NCBI Taxonomy" id="78191"/>
    <lineage>
        <taxon>Eukaryota</taxon>
        <taxon>Viridiplantae</taxon>
        <taxon>Streptophyta</taxon>
        <taxon>Embryophyta</taxon>
        <taxon>Tracheophyta</taxon>
        <taxon>Spermatophyta</taxon>
        <taxon>Magnoliopsida</taxon>
        <taxon>eudicotyledons</taxon>
        <taxon>Gunneridae</taxon>
        <taxon>Pentapetalae</taxon>
        <taxon>rosids</taxon>
        <taxon>malvids</taxon>
        <taxon>Brassicales</taxon>
        <taxon>Brassicaceae</taxon>
        <taxon>Arabideae</taxon>
        <taxon>Arabis</taxon>
    </lineage>
</organism>
<dbReference type="EMBL" id="AP009369">
    <property type="protein sequence ID" value="BAF50066.1"/>
    <property type="molecule type" value="Genomic_DNA"/>
</dbReference>
<dbReference type="EMBL" id="AP009369">
    <property type="protein sequence ID" value="BAF50087.1"/>
    <property type="molecule type" value="Genomic_DNA"/>
</dbReference>
<dbReference type="GO" id="GO:0009570">
    <property type="term" value="C:chloroplast stroma"/>
    <property type="evidence" value="ECO:0007669"/>
    <property type="project" value="UniProtKB-SubCell"/>
</dbReference>
<dbReference type="GO" id="GO:0005524">
    <property type="term" value="F:ATP binding"/>
    <property type="evidence" value="ECO:0007669"/>
    <property type="project" value="UniProtKB-KW"/>
</dbReference>
<dbReference type="GO" id="GO:0016887">
    <property type="term" value="F:ATP hydrolysis activity"/>
    <property type="evidence" value="ECO:0007669"/>
    <property type="project" value="InterPro"/>
</dbReference>
<dbReference type="CDD" id="cd19505">
    <property type="entry name" value="RecA-like_Ycf2"/>
    <property type="match status" value="1"/>
</dbReference>
<dbReference type="Gene3D" id="3.40.50.300">
    <property type="entry name" value="P-loop containing nucleotide triphosphate hydrolases"/>
    <property type="match status" value="1"/>
</dbReference>
<dbReference type="HAMAP" id="MF_01330">
    <property type="entry name" value="Ycf2"/>
    <property type="match status" value="1"/>
</dbReference>
<dbReference type="InterPro" id="IPR003593">
    <property type="entry name" value="AAA+_ATPase"/>
</dbReference>
<dbReference type="InterPro" id="IPR003959">
    <property type="entry name" value="ATPase_AAA_core"/>
</dbReference>
<dbReference type="InterPro" id="IPR027417">
    <property type="entry name" value="P-loop_NTPase"/>
</dbReference>
<dbReference type="InterPro" id="IPR008543">
    <property type="entry name" value="Uncharacterised_Ycf2"/>
</dbReference>
<dbReference type="InterPro" id="IPR056777">
    <property type="entry name" value="Ycf2_N"/>
</dbReference>
<dbReference type="PANTHER" id="PTHR33078:SF89">
    <property type="entry name" value="PROTEIN YCF2"/>
    <property type="match status" value="1"/>
</dbReference>
<dbReference type="PANTHER" id="PTHR33078">
    <property type="entry name" value="PROTEIN YCF2-RELATED"/>
    <property type="match status" value="1"/>
</dbReference>
<dbReference type="Pfam" id="PF00004">
    <property type="entry name" value="AAA"/>
    <property type="match status" value="1"/>
</dbReference>
<dbReference type="Pfam" id="PF05695">
    <property type="entry name" value="Ycf2"/>
    <property type="match status" value="1"/>
</dbReference>
<dbReference type="SMART" id="SM00382">
    <property type="entry name" value="AAA"/>
    <property type="match status" value="1"/>
</dbReference>
<dbReference type="SUPFAM" id="SSF52540">
    <property type="entry name" value="P-loop containing nucleoside triphosphate hydrolases"/>
    <property type="match status" value="1"/>
</dbReference>
<name>YCF2_ARAHI</name>
<comment type="function">
    <text evidence="1">Probable ATPase of unknown function. Its presence in a non-photosynthetic plant (Epifagus virginiana) and experiments in tobacco indicate that it has an essential function which is probably not related to photosynthesis.</text>
</comment>
<comment type="subcellular location">
    <subcellularLocation>
        <location evidence="1">Plastid</location>
        <location evidence="1">Chloroplast stroma</location>
    </subcellularLocation>
</comment>
<comment type="similarity">
    <text evidence="1">Belongs to the Ycf2 family.</text>
</comment>
<geneLocation type="chloroplast"/>
<sequence>MKGHQFKSWIFELREIVREIKNSHYFLDSWTQFNSVGSFIHIFFHQERFRKLLDPRILSILLLRNSQGSTSNRYFTIKGVVLFLVAALLYRINNRNMVESKNLYLKGLLPIPMNSIGPRNDTSEESFGSSNINRLIVSLLYLTKGKKISESCFRDPKESTWVLPITKKCIMPESNWSSRWWRNWIGKKRDFCCKISNETVAGIDISFKEKDIKYLEFLFVYYMDDPIRKGHDWELFDRLSPSKRRNIINLNSGQLFEILVKDWICYLMFAFREKIPIEVEGFFKQQGAGSTIQSNDIEHVSHLFSRNKWPISLQNCAQFHMWQFHQDLFVSWGKNPHESDFFRKISRENWIWLDNVWLVNKDRFFSKVRNVSSNIQYDSTRSSFVKVTDSSQLNGSSDQFIDPFDSISNEDSEYHTLINQREIQQLKERSILWDPSFIQTEGREIESDRFPKYLSGYSSMPRLFTEREKRMNNNLLPEESEEFLGNPTRAIRSFFSDRWSELHLGSNPTERSTRDQKLLKKEQDVSFVPSRRSENKEIVNIFKIITYLQNTVSIHPISSDLGYDMVPKDELDMDSSNKISFLNKNPFFDLFHLFHERKRGGYTLRHDFEAEERFQEMADLFTLSITEPDLVYHKGFAFSIDSYGLDQRQFLKEVFNSRDESKKKSLLVLPPIFYEENESFYRRIRKNWVRISCGNYLEDPKPKRVVFASNNIIEAVNQYRLIRNLIQIQFQYSPYGYIRNVLNRFFLMKRPDRNFEYGIQRDLIGNDTLNHRTIMKDTINQHLSNLKKSQKKWFDPLIFLSRTERSINRDPNAYRYKWSNGSKNFQEHLEHFVSERKSRFQVMFDRLCINQYSIDWSEVIDKKDLSKSLRFFLSKLLRFFLSKLLRFLSKLLLFLSNSLPFLFVSFENIPIHRSEIHIYELKGPNDQLCNQLLESIGLQIVHLKKLKPFLLDDHNTSQKSKFLINGGTISPFLFNKIPKWIIDSFHTRKNRRKSFDNTDSYFSIVSHDQDNWLNPVKPFQRSSLISSFSKANRLRFLNNPHHFCFYCNKRFPFYVEKAHLNNSDFTYGQFLTILFIHNKIFSSCGGKKKHAFLERDTISPSSIESQVSNIFISNDFPQSGDERYNLYKSFHFPIRSDPLVRRAIYSIADISGTPLIEGQRVNFERTYCQTLSDMNRSDSEEKSLHQYLNFNSNMGLIHTPCSEKYLQRKKRSLRLKSLKRCVDKGQLDRTFQRDSAFSTLSKWNLFQTYMPWFFTSTGYKYLNLIFLDTFSDLLRILSSSQKFVSIFHDIMHGLDISWRILQKKLCLPQRNLISEISSKSLHNLLLSEEMIHRNNESSLISIHLRSPNVREVLYSILFLLLVAGYIVRTHLLFVSRAYSELQTEFEKIKSLMIPSYMIELRKLLDRYPTSELNSFWLKNLFLVALEQLGDCLEEIRGSGGNMLWGGDPAYGVKSIRSKKKDLKINFIDIIDLISIIPNPINRITFSRNTRHLSHTSKEIYSLIRKRKNVSGDWIDDKIESWVANSDSIDDKEREFLVQFSTLRAEKRIDQILLSLTHNDHLSKNDSGYQMIEQPGTIYLRYLVDIHKKYLMNYEFNTSCLAERRIFLAHYQTITYSQTSCGANSFHFPSHGKPFSLRLALSPSRSVLVIGSIGIGRSYLVKYLATNSYVPFITVFLNKFLDNKPKGFFIDDIDIDDSDDIDASNDIDRELDTELELLTMMNALTMDMMSEIDRFYITLQFELAKAMSPCIIWIPNIHDLDVNESNYLALGLLVNSLSRDCERCSTRNILVIASTHIPQKVDPALIAPNKLNTCIKIRRLLIPQQRKHFFTLSYTRGFHLEKKMFHTNGFESITMGSSARDLVALTNEALSISITQKKSIIDTNTIRSALHRQTWDLRSQVRSVQDHGILFYQIGRAVAQNVLISNCPIDPISIYMKKKSCNEGDSYLYKWYFELGTSMKKFTILLYLLSCSAGSVAQDLWSLPGPDEKTRITSYGFIENDSDLVHGLLEVQGALVGSSRTEKDCSQFDNDRVTLLFRSEPRDPLYMMQDGSCSIVDQRFLYEKYESEFEEGEGEGVLDPQQIEEDLFNHIVWAPRIWRPRGFLFDCIERPNELGFPYLAGSFRGRRIIYDEKYELQENDSEFLQSGTMQYQRRDRSSKEQGFFRISQFIWDPADPLFFLFKEQPFVSVFSHREFFADEEMSKGLLTSQTDPPTSIYKRWFIKNTQEKHFELLIQRQRWLRTNSSLSNGFFRSNTLSESYQYLSNLFLSNGTLLDRMTKTLLKKRWLFPDEMKIGFM</sequence>
<feature type="chain" id="PRO_0000343758" description="Protein Ycf2">
    <location>
        <begin position="1"/>
        <end position="2296"/>
    </location>
</feature>
<feature type="binding site" evidence="1">
    <location>
        <begin position="1650"/>
        <end position="1657"/>
    </location>
    <ligand>
        <name>ATP</name>
        <dbReference type="ChEBI" id="CHEBI:30616"/>
    </ligand>
</feature>
<reference key="1">
    <citation type="submission" date="2007-03" db="EMBL/GenBank/DDBJ databases">
        <title>Sequencing analysis of Arabis hirsuta chloroplast DNA.</title>
        <authorList>
            <person name="Hosouchi T."/>
            <person name="Tsuruoka H."/>
            <person name="Kotani H."/>
        </authorList>
    </citation>
    <scope>NUCLEOTIDE SEQUENCE [LARGE SCALE GENOMIC DNA]</scope>
</reference>
<accession>A4QK61</accession>
<evidence type="ECO:0000255" key="1">
    <source>
        <dbReference type="HAMAP-Rule" id="MF_01330"/>
    </source>
</evidence>
<proteinExistence type="inferred from homology"/>
<keyword id="KW-0067">ATP-binding</keyword>
<keyword id="KW-0150">Chloroplast</keyword>
<keyword id="KW-0547">Nucleotide-binding</keyword>
<keyword id="KW-0934">Plastid</keyword>